<keyword id="KW-0067">ATP-binding</keyword>
<keyword id="KW-0963">Cytoplasm</keyword>
<keyword id="KW-0436">Ligase</keyword>
<keyword id="KW-0547">Nucleotide-binding</keyword>
<keyword id="KW-0819">tRNA processing</keyword>
<comment type="function">
    <text evidence="1">Ligates lysine onto the cytidine present at position 34 of the AUA codon-specific tRNA(Ile) that contains the anticodon CAU, in an ATP-dependent manner. Cytidine is converted to lysidine, thus changing the amino acid specificity of the tRNA from methionine to isoleucine.</text>
</comment>
<comment type="catalytic activity">
    <reaction evidence="1">
        <text>cytidine(34) in tRNA(Ile2) + L-lysine + ATP = lysidine(34) in tRNA(Ile2) + AMP + diphosphate + H(+)</text>
        <dbReference type="Rhea" id="RHEA:43744"/>
        <dbReference type="Rhea" id="RHEA-COMP:10625"/>
        <dbReference type="Rhea" id="RHEA-COMP:10670"/>
        <dbReference type="ChEBI" id="CHEBI:15378"/>
        <dbReference type="ChEBI" id="CHEBI:30616"/>
        <dbReference type="ChEBI" id="CHEBI:32551"/>
        <dbReference type="ChEBI" id="CHEBI:33019"/>
        <dbReference type="ChEBI" id="CHEBI:82748"/>
        <dbReference type="ChEBI" id="CHEBI:83665"/>
        <dbReference type="ChEBI" id="CHEBI:456215"/>
        <dbReference type="EC" id="6.3.4.19"/>
    </reaction>
</comment>
<comment type="subcellular location">
    <subcellularLocation>
        <location evidence="1">Cytoplasm</location>
    </subcellularLocation>
</comment>
<comment type="domain">
    <text>The N-terminal region contains the highly conserved SGGXDS motif, predicted to be a P-loop motif involved in ATP binding.</text>
</comment>
<comment type="similarity">
    <text evidence="1">Belongs to the tRNA(Ile)-lysidine synthase family.</text>
</comment>
<organism>
    <name type="scientific">Serratia proteamaculans (strain 568)</name>
    <dbReference type="NCBI Taxonomy" id="399741"/>
    <lineage>
        <taxon>Bacteria</taxon>
        <taxon>Pseudomonadati</taxon>
        <taxon>Pseudomonadota</taxon>
        <taxon>Gammaproteobacteria</taxon>
        <taxon>Enterobacterales</taxon>
        <taxon>Yersiniaceae</taxon>
        <taxon>Serratia</taxon>
    </lineage>
</organism>
<accession>A8GIC1</accession>
<feature type="chain" id="PRO_1000085371" description="tRNA(Ile)-lysidine synthase">
    <location>
        <begin position="1"/>
        <end position="436"/>
    </location>
</feature>
<feature type="binding site" evidence="1">
    <location>
        <begin position="25"/>
        <end position="30"/>
    </location>
    <ligand>
        <name>ATP</name>
        <dbReference type="ChEBI" id="CHEBI:30616"/>
    </ligand>
</feature>
<evidence type="ECO:0000255" key="1">
    <source>
        <dbReference type="HAMAP-Rule" id="MF_01161"/>
    </source>
</evidence>
<dbReference type="EC" id="6.3.4.19" evidence="1"/>
<dbReference type="EMBL" id="CP000826">
    <property type="protein sequence ID" value="ABV42861.1"/>
    <property type="molecule type" value="Genomic_DNA"/>
</dbReference>
<dbReference type="SMR" id="A8GIC1"/>
<dbReference type="STRING" id="399741.Spro_3765"/>
<dbReference type="KEGG" id="spe:Spro_3765"/>
<dbReference type="eggNOG" id="COG0037">
    <property type="taxonomic scope" value="Bacteria"/>
</dbReference>
<dbReference type="HOGENOM" id="CLU_018869_2_0_6"/>
<dbReference type="OrthoDB" id="9807403at2"/>
<dbReference type="GO" id="GO:0005737">
    <property type="term" value="C:cytoplasm"/>
    <property type="evidence" value="ECO:0007669"/>
    <property type="project" value="UniProtKB-SubCell"/>
</dbReference>
<dbReference type="GO" id="GO:0005524">
    <property type="term" value="F:ATP binding"/>
    <property type="evidence" value="ECO:0007669"/>
    <property type="project" value="UniProtKB-UniRule"/>
</dbReference>
<dbReference type="GO" id="GO:0032267">
    <property type="term" value="F:tRNA(Ile)-lysidine synthase activity"/>
    <property type="evidence" value="ECO:0007669"/>
    <property type="project" value="UniProtKB-EC"/>
</dbReference>
<dbReference type="GO" id="GO:0006400">
    <property type="term" value="P:tRNA modification"/>
    <property type="evidence" value="ECO:0007669"/>
    <property type="project" value="UniProtKB-UniRule"/>
</dbReference>
<dbReference type="CDD" id="cd01992">
    <property type="entry name" value="TilS_N"/>
    <property type="match status" value="1"/>
</dbReference>
<dbReference type="Gene3D" id="1.20.59.20">
    <property type="match status" value="1"/>
</dbReference>
<dbReference type="Gene3D" id="3.40.50.620">
    <property type="entry name" value="HUPs"/>
    <property type="match status" value="1"/>
</dbReference>
<dbReference type="HAMAP" id="MF_01161">
    <property type="entry name" value="tRNA_Ile_lys_synt"/>
    <property type="match status" value="1"/>
</dbReference>
<dbReference type="InterPro" id="IPR012796">
    <property type="entry name" value="Lysidine-tRNA-synth_C"/>
</dbReference>
<dbReference type="InterPro" id="IPR014729">
    <property type="entry name" value="Rossmann-like_a/b/a_fold"/>
</dbReference>
<dbReference type="InterPro" id="IPR011063">
    <property type="entry name" value="TilS/TtcA_N"/>
</dbReference>
<dbReference type="InterPro" id="IPR012094">
    <property type="entry name" value="tRNA_Ile_lys_synt"/>
</dbReference>
<dbReference type="InterPro" id="IPR012795">
    <property type="entry name" value="tRNA_Ile_lys_synt_N"/>
</dbReference>
<dbReference type="InterPro" id="IPR015262">
    <property type="entry name" value="tRNA_Ile_lys_synt_subst-bd"/>
</dbReference>
<dbReference type="NCBIfam" id="TIGR02433">
    <property type="entry name" value="lysidine_TilS_C"/>
    <property type="match status" value="1"/>
</dbReference>
<dbReference type="NCBIfam" id="TIGR02432">
    <property type="entry name" value="lysidine_TilS_N"/>
    <property type="match status" value="1"/>
</dbReference>
<dbReference type="NCBIfam" id="NF007942">
    <property type="entry name" value="PRK10660.1"/>
    <property type="match status" value="1"/>
</dbReference>
<dbReference type="PANTHER" id="PTHR43033">
    <property type="entry name" value="TRNA(ILE)-LYSIDINE SYNTHASE-RELATED"/>
    <property type="match status" value="1"/>
</dbReference>
<dbReference type="PANTHER" id="PTHR43033:SF1">
    <property type="entry name" value="TRNA(ILE)-LYSIDINE SYNTHASE-RELATED"/>
    <property type="match status" value="1"/>
</dbReference>
<dbReference type="Pfam" id="PF01171">
    <property type="entry name" value="ATP_bind_3"/>
    <property type="match status" value="1"/>
</dbReference>
<dbReference type="Pfam" id="PF09179">
    <property type="entry name" value="TilS"/>
    <property type="match status" value="1"/>
</dbReference>
<dbReference type="Pfam" id="PF11734">
    <property type="entry name" value="TilS_C"/>
    <property type="match status" value="1"/>
</dbReference>
<dbReference type="SMART" id="SM00977">
    <property type="entry name" value="TilS_C"/>
    <property type="match status" value="1"/>
</dbReference>
<dbReference type="SUPFAM" id="SSF52402">
    <property type="entry name" value="Adenine nucleotide alpha hydrolases-like"/>
    <property type="match status" value="1"/>
</dbReference>
<dbReference type="SUPFAM" id="SSF82829">
    <property type="entry name" value="MesJ substrate recognition domain-like"/>
    <property type="match status" value="1"/>
</dbReference>
<dbReference type="SUPFAM" id="SSF56037">
    <property type="entry name" value="PheT/TilS domain"/>
    <property type="match status" value="1"/>
</dbReference>
<reference key="1">
    <citation type="submission" date="2007-09" db="EMBL/GenBank/DDBJ databases">
        <title>Complete sequence of chromosome of Serratia proteamaculans 568.</title>
        <authorList>
            <consortium name="US DOE Joint Genome Institute"/>
            <person name="Copeland A."/>
            <person name="Lucas S."/>
            <person name="Lapidus A."/>
            <person name="Barry K."/>
            <person name="Glavina del Rio T."/>
            <person name="Dalin E."/>
            <person name="Tice H."/>
            <person name="Pitluck S."/>
            <person name="Chain P."/>
            <person name="Malfatti S."/>
            <person name="Shin M."/>
            <person name="Vergez L."/>
            <person name="Schmutz J."/>
            <person name="Larimer F."/>
            <person name="Land M."/>
            <person name="Hauser L."/>
            <person name="Kyrpides N."/>
            <person name="Kim E."/>
            <person name="Taghavi S."/>
            <person name="Newman L."/>
            <person name="Vangronsveld J."/>
            <person name="van der Lelie D."/>
            <person name="Richardson P."/>
        </authorList>
    </citation>
    <scope>NUCLEOTIDE SEQUENCE [LARGE SCALE GENOMIC DNA]</scope>
    <source>
        <strain>568</strain>
    </source>
</reference>
<sequence>MNNNQLSAQLARQLGAHRHLLVAFSGGLDSSVLLHLLVGLRQQLPDLQLRAVHVHHGLSAFADQWVTHCRQQCVAWQLPLVVQHVQVDSQQGGIEAAARAARYSAFASTLAADETLLTAQHLDDQCETFLLALKRGSGPAGLSAMAAQTSLGNNHLLRPLLGHSRQQLEAYAQQHQLSWIEDDSNQDPRFDRNFLRLQVLPLLNQRWPHFAAATARSASLCAEQEQLLDELLAEQLHNLLDEDRALAIDGLLTCSAARRFALLRRWIALFGVTMPSREQLQRLWEEVALSREDAEPQLQLGQYQFRRFRRRLYLLPLMADLREISLSWSLDDSLMLPDGLGELVSGEGDICLRAPQSQQKVSIRFSAQGKHRILGRAHSRPIKKLWQELGIPPWQRERIPLIYYDDQLIAALGIFVSEAGQTPEGQQPWRLHWRKK</sequence>
<proteinExistence type="inferred from homology"/>
<name>TILS_SERP5</name>
<gene>
    <name evidence="1" type="primary">tilS</name>
    <name type="ordered locus">Spro_3765</name>
</gene>
<protein>
    <recommendedName>
        <fullName evidence="1">tRNA(Ile)-lysidine synthase</fullName>
        <ecNumber evidence="1">6.3.4.19</ecNumber>
    </recommendedName>
    <alternativeName>
        <fullName evidence="1">tRNA(Ile)-2-lysyl-cytidine synthase</fullName>
    </alternativeName>
    <alternativeName>
        <fullName evidence="1">tRNA(Ile)-lysidine synthetase</fullName>
    </alternativeName>
</protein>